<dbReference type="EC" id="7.1.1.9"/>
<dbReference type="EMBL" id="M97514">
    <property type="protein sequence ID" value="AAB58808.1"/>
    <property type="status" value="ALT_SEQ"/>
    <property type="molecule type" value="Genomic_DNA"/>
</dbReference>
<dbReference type="SMR" id="P98001"/>
<dbReference type="UniPathway" id="UPA00705"/>
<dbReference type="GO" id="GO:0005743">
    <property type="term" value="C:mitochondrial inner membrane"/>
    <property type="evidence" value="ECO:0007669"/>
    <property type="project" value="UniProtKB-SubCell"/>
</dbReference>
<dbReference type="GO" id="GO:0045277">
    <property type="term" value="C:respiratory chain complex IV"/>
    <property type="evidence" value="ECO:0007669"/>
    <property type="project" value="InterPro"/>
</dbReference>
<dbReference type="GO" id="GO:0004129">
    <property type="term" value="F:cytochrome-c oxidase activity"/>
    <property type="evidence" value="ECO:0007669"/>
    <property type="project" value="UniProtKB-EC"/>
</dbReference>
<dbReference type="GO" id="GO:0020037">
    <property type="term" value="F:heme binding"/>
    <property type="evidence" value="ECO:0007669"/>
    <property type="project" value="InterPro"/>
</dbReference>
<dbReference type="GO" id="GO:0046872">
    <property type="term" value="F:metal ion binding"/>
    <property type="evidence" value="ECO:0007669"/>
    <property type="project" value="UniProtKB-KW"/>
</dbReference>
<dbReference type="GO" id="GO:0015990">
    <property type="term" value="P:electron transport coupled proton transport"/>
    <property type="evidence" value="ECO:0007669"/>
    <property type="project" value="TreeGrafter"/>
</dbReference>
<dbReference type="GO" id="GO:0006123">
    <property type="term" value="P:mitochondrial electron transport, cytochrome c to oxygen"/>
    <property type="evidence" value="ECO:0007669"/>
    <property type="project" value="TreeGrafter"/>
</dbReference>
<dbReference type="CDD" id="cd01663">
    <property type="entry name" value="Cyt_c_Oxidase_I"/>
    <property type="match status" value="1"/>
</dbReference>
<dbReference type="FunFam" id="1.20.210.10:FF:000001">
    <property type="entry name" value="Cytochrome c oxidase subunit 1"/>
    <property type="match status" value="1"/>
</dbReference>
<dbReference type="Gene3D" id="1.20.210.10">
    <property type="entry name" value="Cytochrome c oxidase-like, subunit I domain"/>
    <property type="match status" value="1"/>
</dbReference>
<dbReference type="InterPro" id="IPR023616">
    <property type="entry name" value="Cyt_c_oxase-like_su1_dom"/>
</dbReference>
<dbReference type="InterPro" id="IPR036927">
    <property type="entry name" value="Cyt_c_oxase-like_su1_sf"/>
</dbReference>
<dbReference type="InterPro" id="IPR000883">
    <property type="entry name" value="Cyt_C_Oxase_1"/>
</dbReference>
<dbReference type="InterPro" id="IPR023615">
    <property type="entry name" value="Cyt_c_Oxase_su1_BS"/>
</dbReference>
<dbReference type="InterPro" id="IPR033944">
    <property type="entry name" value="Cyt_c_oxase_su1_dom"/>
</dbReference>
<dbReference type="PANTHER" id="PTHR10422">
    <property type="entry name" value="CYTOCHROME C OXIDASE SUBUNIT 1"/>
    <property type="match status" value="1"/>
</dbReference>
<dbReference type="PANTHER" id="PTHR10422:SF18">
    <property type="entry name" value="CYTOCHROME C OXIDASE SUBUNIT 1"/>
    <property type="match status" value="1"/>
</dbReference>
<dbReference type="Pfam" id="PF00115">
    <property type="entry name" value="COX1"/>
    <property type="match status" value="1"/>
</dbReference>
<dbReference type="PRINTS" id="PR01165">
    <property type="entry name" value="CYCOXIDASEI"/>
</dbReference>
<dbReference type="SUPFAM" id="SSF81442">
    <property type="entry name" value="Cytochrome c oxidase subunit I-like"/>
    <property type="match status" value="1"/>
</dbReference>
<dbReference type="PROSITE" id="PS50855">
    <property type="entry name" value="COX1"/>
    <property type="match status" value="1"/>
</dbReference>
<dbReference type="PROSITE" id="PS00077">
    <property type="entry name" value="COX1_CUB"/>
    <property type="match status" value="1"/>
</dbReference>
<accession>P98001</accession>
<organism>
    <name type="scientific">Saccharomyces paradoxus</name>
    <name type="common">Yeast</name>
    <name type="synonym">Saccharomyces douglasii</name>
    <dbReference type="NCBI Taxonomy" id="27291"/>
    <lineage>
        <taxon>Eukaryota</taxon>
        <taxon>Fungi</taxon>
        <taxon>Dikarya</taxon>
        <taxon>Ascomycota</taxon>
        <taxon>Saccharomycotina</taxon>
        <taxon>Saccharomycetes</taxon>
        <taxon>Saccharomycetales</taxon>
        <taxon>Saccharomycetaceae</taxon>
        <taxon>Saccharomyces</taxon>
    </lineage>
</organism>
<feature type="chain" id="PRO_0000183410" description="Cytochrome c oxidase subunit 1">
    <location>
        <begin position="1"/>
        <end position="534"/>
    </location>
</feature>
<feature type="transmembrane region" description="Helical" evidence="3">
    <location>
        <begin position="16"/>
        <end position="36"/>
    </location>
</feature>
<feature type="transmembrane region" description="Helical" evidence="3">
    <location>
        <begin position="57"/>
        <end position="77"/>
    </location>
</feature>
<feature type="transmembrane region" description="Helical" evidence="3">
    <location>
        <begin position="101"/>
        <end position="121"/>
    </location>
</feature>
<feature type="transmembrane region" description="Helical" evidence="3">
    <location>
        <begin position="147"/>
        <end position="167"/>
    </location>
</feature>
<feature type="transmembrane region" description="Helical" evidence="3">
    <location>
        <begin position="182"/>
        <end position="202"/>
    </location>
</feature>
<feature type="transmembrane region" description="Helical" evidence="3">
    <location>
        <begin position="235"/>
        <end position="255"/>
    </location>
</feature>
<feature type="transmembrane region" description="Helical" evidence="3">
    <location>
        <begin position="267"/>
        <end position="287"/>
    </location>
</feature>
<feature type="transmembrane region" description="Helical" evidence="3">
    <location>
        <begin position="310"/>
        <end position="330"/>
    </location>
</feature>
<feature type="transmembrane region" description="Helical" evidence="3">
    <location>
        <begin position="338"/>
        <end position="358"/>
    </location>
</feature>
<feature type="transmembrane region" description="Helical" evidence="3">
    <location>
        <begin position="372"/>
        <end position="392"/>
    </location>
</feature>
<feature type="transmembrane region" description="Helical" evidence="3">
    <location>
        <begin position="414"/>
        <end position="434"/>
    </location>
</feature>
<feature type="transmembrane region" description="Helical" evidence="3">
    <location>
        <begin position="452"/>
        <end position="472"/>
    </location>
</feature>
<feature type="binding site" evidence="2">
    <location>
        <position position="39"/>
    </location>
    <ligand>
        <name>Ca(2+)</name>
        <dbReference type="ChEBI" id="CHEBI:29108"/>
    </ligand>
</feature>
<feature type="binding site" evidence="2">
    <location>
        <position position="42"/>
    </location>
    <ligand>
        <name>Ca(2+)</name>
        <dbReference type="ChEBI" id="CHEBI:29108"/>
    </ligand>
</feature>
<feature type="binding site" evidence="2">
    <location>
        <position position="44"/>
    </location>
    <ligand>
        <name>Ca(2+)</name>
        <dbReference type="ChEBI" id="CHEBI:29108"/>
    </ligand>
</feature>
<feature type="binding site" description="axial binding residue" evidence="2">
    <location>
        <position position="62"/>
    </location>
    <ligand>
        <name>Fe(II)-heme a</name>
        <dbReference type="ChEBI" id="CHEBI:61715"/>
        <note>low-spin</note>
    </ligand>
    <ligandPart>
        <name>Fe</name>
        <dbReference type="ChEBI" id="CHEBI:18248"/>
    </ligandPart>
</feature>
<feature type="binding site" evidence="2">
    <location>
        <position position="241"/>
    </location>
    <ligand>
        <name>Cu cation</name>
        <dbReference type="ChEBI" id="CHEBI:23378"/>
        <label>B</label>
    </ligand>
</feature>
<feature type="binding site" evidence="1">
    <location>
        <position position="245"/>
    </location>
    <ligand>
        <name>O2</name>
        <dbReference type="ChEBI" id="CHEBI:15379"/>
    </ligand>
</feature>
<feature type="binding site" evidence="2">
    <location>
        <position position="290"/>
    </location>
    <ligand>
        <name>Cu cation</name>
        <dbReference type="ChEBI" id="CHEBI:23378"/>
        <label>B</label>
    </ligand>
</feature>
<feature type="binding site" evidence="2">
    <location>
        <position position="291"/>
    </location>
    <ligand>
        <name>Cu cation</name>
        <dbReference type="ChEBI" id="CHEBI:23378"/>
        <label>B</label>
    </ligand>
</feature>
<feature type="binding site" evidence="2">
    <location>
        <position position="368"/>
    </location>
    <ligand>
        <name>Mg(2+)</name>
        <dbReference type="ChEBI" id="CHEBI:18420"/>
        <note>ligand shared with subunit 2</note>
    </ligand>
</feature>
<feature type="binding site" evidence="2">
    <location>
        <position position="369"/>
    </location>
    <ligand>
        <name>Mg(2+)</name>
        <dbReference type="ChEBI" id="CHEBI:18420"/>
        <note>ligand shared with subunit 2</note>
    </ligand>
</feature>
<feature type="binding site" description="axial binding residue" evidence="2">
    <location>
        <position position="376"/>
    </location>
    <ligand>
        <name>heme a3</name>
        <dbReference type="ChEBI" id="CHEBI:83282"/>
        <note>high-spin</note>
    </ligand>
    <ligandPart>
        <name>Fe</name>
        <dbReference type="ChEBI" id="CHEBI:18248"/>
    </ligandPart>
</feature>
<feature type="binding site" description="axial binding residue" evidence="2">
    <location>
        <position position="378"/>
    </location>
    <ligand>
        <name>Fe(II)-heme a</name>
        <dbReference type="ChEBI" id="CHEBI:61715"/>
        <note>low-spin</note>
    </ligand>
    <ligandPart>
        <name>Fe</name>
        <dbReference type="ChEBI" id="CHEBI:18248"/>
    </ligandPart>
</feature>
<feature type="binding site" evidence="2">
    <location>
        <position position="441"/>
    </location>
    <ligand>
        <name>Ca(2+)</name>
        <dbReference type="ChEBI" id="CHEBI:29108"/>
    </ligand>
</feature>
<feature type="cross-link" description="1'-histidyl-3'-tyrosine (His-Tyr)" evidence="2">
    <location>
        <begin position="241"/>
        <end position="245"/>
    </location>
</feature>
<protein>
    <recommendedName>
        <fullName>Cytochrome c oxidase subunit 1</fullName>
        <ecNumber>7.1.1.9</ecNumber>
    </recommendedName>
    <alternativeName>
        <fullName>Cytochrome c oxidase polypeptide I</fullName>
    </alternativeName>
</protein>
<proteinExistence type="inferred from homology"/>
<geneLocation type="mitochondrion"/>
<evidence type="ECO:0000250" key="1">
    <source>
        <dbReference type="UniProtKB" id="P00396"/>
    </source>
</evidence>
<evidence type="ECO:0000250" key="2">
    <source>
        <dbReference type="UniProtKB" id="P00401"/>
    </source>
</evidence>
<evidence type="ECO:0000255" key="3"/>
<evidence type="ECO:0000305" key="4"/>
<reference key="1">
    <citation type="journal article" date="1993" name="Gene">
        <title>Sequence of the mitochondrial gene encoding subunit I of cytochrome oxidase in Saccharomyces douglasii.</title>
        <authorList>
            <person name="Tian G.L."/>
            <person name="Michel F."/>
            <person name="Macadre C."/>
            <person name="Lazowska J."/>
        </authorList>
    </citation>
    <scope>NUCLEOTIDE SEQUENCE [GENOMIC DNA]</scope>
    <source>
        <strain>SD12</strain>
    </source>
</reference>
<sequence length="534" mass="58747">MVQRWLYSTNAKDIAVLYFMLAIFSGMAGTAMSLIIRLELAAPGSQYLQGNAQLFNVLVVGHAVLMIFFLVMPALIGGFGNYLLPLMIGATDTAFPRINNIAFWVLPMGLVCLVTSTLVESGAGTGWTVYPPLSSIQAHSGPSVDLAIFALHLTSISSLLGAINFIVTTLNMRTNGMTMHKLPLFVWSIFITAFLLLLSLPVLSAGITMLLLDRNFNTSFFEVAGGGDPILYEHLFYFFGHPEVYILIIPGFGIISHVVSTYSKKPVFGEISMVYAMASIGLLGFLVWSHHMYIVGLDADTRAYFTSATMIIAIPTGIKIFSWLATIYGGSIRLATPMLYAIAFLFLFTMGGLTGVALANASLDVAFHDTYYVVGHFHYVLSMGAIFSLFAGYYYWSPQILGLNYNEKLAQIQFWLIFIGANVIFFPMHFLGINGMPRRIPDYPDAFAGWNYVASIGSFIATLSLFLFIYILYDQLVNGLNNKVNNKSVIYTKAPDFVESNTIFNLNTVKSSSIEFLLTSPPAVHSFNTPAVQS</sequence>
<gene>
    <name type="primary">COXI</name>
</gene>
<comment type="function">
    <text evidence="2">Component of the cytochrome c oxidase, the last enzyme in the mitochondrial electron transport chain which drives oxidative phosphorylation. The respiratory chain contains 3 multisubunit complexes succinate dehydrogenase (complex II, CII), ubiquinol-cytochrome c oxidoreductase (cytochrome b-c1 complex, complex III, CIII) and cytochrome c oxidase (complex IV, CIV), that cooperate to transfer electrons derived from NADH and succinate to molecular oxygen, creating an electrochemical gradient over the inner membrane that drives transmembrane transport and the ATP synthase. Cytochrome c oxidase is the component of the respiratory chain that catalyzes the reduction of oxygen to water. Electrons originating from reduced cytochrome c in the intermembrane space (IMS) are transferred via the dinuclear copper A center (CU(A)) of subunit 2 and heme A of subunit 1 to the active site in subunit 1, a binuclear center (BNC) formed by heme A3 and copper B (CU(B)). The BNC reduces molecular oxygen to 2 water molecules using 4 electrons from cytochrome c in the IMS and 4 protons from the mitochondrial matrix.</text>
</comment>
<comment type="catalytic activity">
    <reaction evidence="2">
        <text>4 Fe(II)-[cytochrome c] + O2 + 8 H(+)(in) = 4 Fe(III)-[cytochrome c] + 2 H2O + 4 H(+)(out)</text>
        <dbReference type="Rhea" id="RHEA:11436"/>
        <dbReference type="Rhea" id="RHEA-COMP:10350"/>
        <dbReference type="Rhea" id="RHEA-COMP:14399"/>
        <dbReference type="ChEBI" id="CHEBI:15377"/>
        <dbReference type="ChEBI" id="CHEBI:15378"/>
        <dbReference type="ChEBI" id="CHEBI:15379"/>
        <dbReference type="ChEBI" id="CHEBI:29033"/>
        <dbReference type="ChEBI" id="CHEBI:29034"/>
        <dbReference type="EC" id="7.1.1.9"/>
    </reaction>
    <physiologicalReaction direction="left-to-right" evidence="2">
        <dbReference type="Rhea" id="RHEA:11437"/>
    </physiologicalReaction>
</comment>
<comment type="cofactor">
    <cofactor evidence="2">
        <name>heme</name>
        <dbReference type="ChEBI" id="CHEBI:30413"/>
    </cofactor>
    <text evidence="2">Binds 2 heme A groups non-covalently per subunit.</text>
</comment>
<comment type="cofactor">
    <cofactor evidence="2">
        <name>Cu cation</name>
        <dbReference type="ChEBI" id="CHEBI:23378"/>
    </cofactor>
    <text evidence="2">Binds a copper B center.</text>
</comment>
<comment type="pathway">
    <text evidence="2">Energy metabolism; oxidative phosphorylation.</text>
</comment>
<comment type="subunit">
    <text evidence="2">Component of the cytochrome c oxidase (complex IV, CIV), a multisubunit enzyme composed of a catalytic core of 3 subunits and several supernumerary subunits. The complex exists as a monomer or a dimer and forms supercomplexes (SCs) in the inner mitochondrial membrane with ubiquinol-cytochrome c oxidoreductase (cytochrome b-c1 complex, complex III, CIII).</text>
</comment>
<comment type="subcellular location">
    <subcellularLocation>
        <location evidence="2">Mitochondrion inner membrane</location>
        <topology evidence="2">Multi-pass membrane protein</topology>
    </subcellularLocation>
</comment>
<comment type="similarity">
    <text evidence="4">Belongs to the heme-copper respiratory oxidase family.</text>
</comment>
<name>COX1_SACPA</name>
<keyword id="KW-0106">Calcium</keyword>
<keyword id="KW-0186">Copper</keyword>
<keyword id="KW-0249">Electron transport</keyword>
<keyword id="KW-0349">Heme</keyword>
<keyword id="KW-0408">Iron</keyword>
<keyword id="KW-0460">Magnesium</keyword>
<keyword id="KW-0472">Membrane</keyword>
<keyword id="KW-0479">Metal-binding</keyword>
<keyword id="KW-0496">Mitochondrion</keyword>
<keyword id="KW-0999">Mitochondrion inner membrane</keyword>
<keyword id="KW-0679">Respiratory chain</keyword>
<keyword id="KW-1278">Translocase</keyword>
<keyword id="KW-0812">Transmembrane</keyword>
<keyword id="KW-1133">Transmembrane helix</keyword>
<keyword id="KW-0813">Transport</keyword>